<proteinExistence type="inferred from homology"/>
<feature type="chain" id="PRO_0000245126" description="Virion infectivity factor" evidence="2">
    <location>
        <begin position="1"/>
        <end position="193"/>
    </location>
</feature>
<feature type="chain" id="PRO_0000245127" description="p17" evidence="2">
    <location>
        <begin position="1"/>
        <end position="151"/>
    </location>
</feature>
<feature type="chain" id="PRO_0000441077" description="p7" evidence="2">
    <location>
        <begin position="152"/>
        <end position="193"/>
    </location>
</feature>
<feature type="region of interest" description="Interaction with host APOBEC3F; F1-box" evidence="2">
    <location>
        <begin position="14"/>
        <end position="17"/>
    </location>
</feature>
<feature type="region of interest" description="Interaction with host APOBEC3G; G-box" evidence="2">
    <location>
        <begin position="40"/>
        <end position="44"/>
    </location>
</feature>
<feature type="region of interest" description="Interaction with host APOBEC3F and APOBEC3G; FG-box" evidence="2">
    <location>
        <begin position="54"/>
        <end position="73"/>
    </location>
</feature>
<feature type="region of interest" description="Interaction with host APOBEC3F; F2-box" evidence="2">
    <location>
        <begin position="75"/>
        <end position="80"/>
    </location>
</feature>
<feature type="region of interest" description="RNA-binding" evidence="2">
    <location>
        <begin position="76"/>
        <end position="115"/>
    </location>
</feature>
<feature type="region of interest" description="SOCS box-like" evidence="2">
    <location>
        <begin position="152"/>
        <end position="181"/>
    </location>
</feature>
<feature type="region of interest" description="Multimerization" evidence="2">
    <location>
        <begin position="152"/>
        <end position="165"/>
    </location>
</feature>
<feature type="region of interest" description="Membrane association" evidence="2">
    <location>
        <begin position="172"/>
        <end position="173"/>
    </location>
</feature>
<feature type="region of interest" description="Disordered" evidence="3">
    <location>
        <begin position="173"/>
        <end position="193"/>
    </location>
</feature>
<feature type="short sequence motif" description="HCCH motif" evidence="2">
    <location>
        <begin position="109"/>
        <end position="140"/>
    </location>
</feature>
<feature type="short sequence motif" description="BC-box-like motif" evidence="2">
    <location>
        <begin position="145"/>
        <end position="154"/>
    </location>
</feature>
<feature type="binding site" evidence="2">
    <location>
        <position position="109"/>
    </location>
    <ligand>
        <name>Zn(2+)</name>
        <dbReference type="ChEBI" id="CHEBI:29105"/>
    </ligand>
</feature>
<feature type="binding site" evidence="2">
    <location>
        <position position="115"/>
    </location>
    <ligand>
        <name>Zn(2+)</name>
        <dbReference type="ChEBI" id="CHEBI:29105"/>
    </ligand>
</feature>
<feature type="binding site" evidence="2">
    <location>
        <position position="134"/>
    </location>
    <ligand>
        <name>Zn(2+)</name>
        <dbReference type="ChEBI" id="CHEBI:29105"/>
    </ligand>
</feature>
<feature type="binding site" evidence="2">
    <location>
        <position position="140"/>
    </location>
    <ligand>
        <name>Zn(2+)</name>
        <dbReference type="ChEBI" id="CHEBI:29105"/>
    </ligand>
</feature>
<feature type="site" description="Cleavage in virion (by viral protease)" evidence="2">
    <location>
        <begin position="151"/>
        <end position="152"/>
    </location>
</feature>
<feature type="modified residue" description="Phosphothreonine; by host MAP4K1" evidence="2">
    <location>
        <position position="97"/>
    </location>
</feature>
<feature type="modified residue" description="Phosphoserine; by host" evidence="2">
    <location>
        <position position="145"/>
    </location>
</feature>
<feature type="modified residue" description="Phosphothreonine; by host" evidence="2">
    <location>
        <position position="156"/>
    </location>
</feature>
<feature type="modified residue" description="Phosphoserine; by host MAP4K1" evidence="2">
    <location>
        <position position="166"/>
    </location>
</feature>
<feature type="modified residue" description="Phosphothreonine; by host" evidence="2">
    <location>
        <position position="189"/>
    </location>
</feature>
<keyword id="KW-0014">AIDS</keyword>
<keyword id="KW-1032">Host cell membrane</keyword>
<keyword id="KW-1035">Host cytoplasm</keyword>
<keyword id="KW-1043">Host membrane</keyword>
<keyword id="KW-0945">Host-virus interaction</keyword>
<keyword id="KW-0472">Membrane</keyword>
<keyword id="KW-0479">Metal-binding</keyword>
<keyword id="KW-0597">Phosphoprotein</keyword>
<keyword id="KW-0694">RNA-binding</keyword>
<keyword id="KW-0832">Ubl conjugation</keyword>
<keyword id="KW-0833">Ubl conjugation pathway</keyword>
<keyword id="KW-0946">Virion</keyword>
<keyword id="KW-0862">Zinc</keyword>
<sequence>MENRWQVMIVWQVDRMRIRTWNSLVKHHMYVSRRAKGWFYRHHYESRHPKVSSEVHIPLEDDSKLVIITYWGLHTGERDWHLGHGVSIEWRQKRYRTQVDPDLADQLIHLRYFDCFSESAIRNAILGHRVSPRCNYQAGHNKVGSLQYLALTALITPKKIKPPLPSVRKLVEDRWNNPQKTKGHRGSHTMNGH</sequence>
<organismHost>
    <name type="scientific">Homo sapiens</name>
    <name type="common">Human</name>
    <dbReference type="NCBI Taxonomy" id="9606"/>
</organismHost>
<comment type="function">
    <text evidence="2">Counteracts the innate antiviral activity of host APOBEC3F and APOBEC3G by promoting their ubiquitination and degradation. Acts as a substrate recognition component of an E3 ubiquitin-protein ligase complex: mechanistically, Vif hijacks a host cullin-5-RING E3 ubiquitin-protein ligase complex (ECS complex) and the transcription coactivator CBFB/CBF-beta to form an active E3 ubiquitin-protein ligase complex that targets APOBEC3G and APOBEC3F for polyubiquitination, leading to their degradation by the proteasome. Vif interaction with APOBEC3G also blocks its cytidine deaminase activity in a proteasome-independent manner, suggesting a dual inhibitory mechanism. May interact directly with APOBEC3G mRNA in order to inhibit its translation. Association with CBFB/CBF-beta also inhibits the transcription coactivator activity of CBFB/CBF-beta. Seems to play a role in viral morphology by affecting the stability of the viral nucleoprotein core. Finally, Vif also contributes to the G2 cell cycle arrest observed in HIV infected cells.</text>
</comment>
<comment type="subunit">
    <text evidence="1">Homomultimer; in vitro and presumably in vivo. Interacts with viral RNA and Pr55Gag precursor; these interactions mediate Vif incorporation into the virion. Interacts with the viral reverse transcriptase. Forms cullin-5-RING E3 ubiquitin-protein ligase complex (ECS complex) by interacting with host CUL5, RBX2, elongin BC complex (ELOB and ELOC) and CBFB/CBF-beta. Within the ECS complex, Vif interacts directly with host CUL5, ELOC and APOBEC (APOBEC3F and APOBEC3G) substrates. The ECS complex also contains some single-stranded RNA (ssRNA) that acts as a glue that bridges Vif with APOBEC (APOBEC3F and APOBEC3G) substrates. Interacts with host UBCE7IP1 isoform 3/ZIN and possibly with SAT. Interacts with host tyrosine kinases HCK and FYN; these interactions may decrease level of phosphorylated APOBEC3G incorporation into virions. Interacts with host ABCE1; this interaction may play a role in protecting viral RNA from damage during viral assembly. Interacts with host MDM2; this interaction targets Vif for degradation by the proteasome.</text>
</comment>
<comment type="subcellular location">
    <subcellularLocation>
        <location evidence="2">Host cytoplasm</location>
    </subcellularLocation>
    <subcellularLocation>
        <location evidence="2">Host cell membrane</location>
        <topology evidence="2">Peripheral membrane protein</topology>
        <orientation evidence="2">Cytoplasmic side</orientation>
    </subcellularLocation>
    <subcellularLocation>
        <location evidence="2">Virion</location>
    </subcellularLocation>
    <text evidence="2">In the cytoplasm, seems to colocalize with intermediate filament vimentin. A fraction is associated with the cytoplasmic side of cellular membranes, presumably via the interaction with Pr55Gag precursor. Incorporated in virions at a ratio of approximately 7 to 20 molecules per virion.</text>
</comment>
<comment type="induction">
    <text evidence="2">Expressed late during infection in a Rev-dependent manner.</text>
</comment>
<comment type="domain">
    <text evidence="2">The BC-like-box motif mediates the interaction with elongin BC complex.</text>
</comment>
<comment type="domain">
    <text evidence="2">The HCCH motif (H-x(5)-C-x(18)-C-x(5)-H) mediates the interaction with CUL5.</text>
</comment>
<comment type="PTM">
    <text evidence="2">Processed in virion by the viral protease.</text>
</comment>
<comment type="PTM">
    <text evidence="2">Highly phosphorylated on serine and threonine residues.</text>
</comment>
<comment type="PTM">
    <text evidence="2">Polyubiquitinated and degraded by the proteasome in the presence of APOBEC3G.</text>
</comment>
<comment type="miscellaneous">
    <text evidence="2">Vif-defective viruses show catastrophic failure in reverse transcription due to APOBEC-induced mutations that initiate a DNA base repair pathway and compromise the structural integrity of the ssDNA. In the absence of Vif, the virion is morphologically abnormal.</text>
</comment>
<comment type="miscellaneous">
    <text evidence="2">HIV-1 lineages are divided in three main groups, M (for Major), O (for Outlier), and N (for New, or Non-M, Non-O). The vast majority of strains found worldwide belong to the group M. Group O seems to be endemic to and largely confined to Cameroon and neighboring countries in West Central Africa, where these viruses represent a small minority of HIV-1 strains. The group N is represented by a limited number of isolates from Cameroonian persons. The group M is further subdivided in 9 clades or subtypes (A to D, F to H, J and K).</text>
</comment>
<comment type="miscellaneous">
    <text evidence="2">Required for replication in 'nonpermissive' cells, including primary T-cells, macrophages and certain T-cell lines, but is dispensable for replication in 'permissive' cell lines, such as 293T cells. In nonpermissive cells, Vif-defective viruses can produce virions, but they fail to complete reverse transcription and cannot successfully infect new cells.</text>
</comment>
<comment type="similarity">
    <text evidence="2">Belongs to the primate lentivirus group Vif protein family.</text>
</comment>
<name>VIF_HV1MP</name>
<gene>
    <name evidence="2" type="primary">vif</name>
</gene>
<protein>
    <recommendedName>
        <fullName evidence="2">Virion infectivity factor</fullName>
        <shortName evidence="2">Vif</shortName>
    </recommendedName>
    <alternativeName>
        <fullName evidence="2">SOR protein</fullName>
    </alternativeName>
    <component>
        <recommendedName>
            <fullName evidence="2">p17</fullName>
        </recommendedName>
    </component>
    <component>
        <recommendedName>
            <fullName evidence="2">p7</fullName>
        </recommendedName>
    </component>
</protein>
<accession>P0C1L8</accession>
<dbReference type="EMBL" id="AJ249236">
    <property type="status" value="NOT_ANNOTATED_CDS"/>
    <property type="molecule type" value="Genomic_RNA"/>
</dbReference>
<dbReference type="SMR" id="P0C1L8"/>
<dbReference type="Proteomes" id="UP000120463">
    <property type="component" value="Segment"/>
</dbReference>
<dbReference type="GO" id="GO:0030430">
    <property type="term" value="C:host cell cytoplasm"/>
    <property type="evidence" value="ECO:0007669"/>
    <property type="project" value="UniProtKB-SubCell"/>
</dbReference>
<dbReference type="GO" id="GO:0020002">
    <property type="term" value="C:host cell plasma membrane"/>
    <property type="evidence" value="ECO:0007669"/>
    <property type="project" value="UniProtKB-SubCell"/>
</dbReference>
<dbReference type="GO" id="GO:0016020">
    <property type="term" value="C:membrane"/>
    <property type="evidence" value="ECO:0007669"/>
    <property type="project" value="UniProtKB-UniRule"/>
</dbReference>
<dbReference type="GO" id="GO:0044423">
    <property type="term" value="C:virion component"/>
    <property type="evidence" value="ECO:0007669"/>
    <property type="project" value="UniProtKB-UniRule"/>
</dbReference>
<dbReference type="GO" id="GO:0046872">
    <property type="term" value="F:metal ion binding"/>
    <property type="evidence" value="ECO:0007669"/>
    <property type="project" value="UniProtKB-KW"/>
</dbReference>
<dbReference type="GO" id="GO:0003723">
    <property type="term" value="F:RNA binding"/>
    <property type="evidence" value="ECO:0007669"/>
    <property type="project" value="UniProtKB-UniRule"/>
</dbReference>
<dbReference type="GO" id="GO:0019058">
    <property type="term" value="P:viral life cycle"/>
    <property type="evidence" value="ECO:0007669"/>
    <property type="project" value="InterPro"/>
</dbReference>
<dbReference type="HAMAP" id="MF_04081">
    <property type="entry name" value="HIV_VIF"/>
    <property type="match status" value="1"/>
</dbReference>
<dbReference type="InterPro" id="IPR000475">
    <property type="entry name" value="Vif"/>
</dbReference>
<dbReference type="Pfam" id="PF00559">
    <property type="entry name" value="Vif"/>
    <property type="match status" value="1"/>
</dbReference>
<dbReference type="PRINTS" id="PR00349">
    <property type="entry name" value="VIRIONINFFCT"/>
</dbReference>
<organism>
    <name type="scientific">Human immunodeficiency virus type 1 group M subtype F2 (isolate MP255)</name>
    <name type="common">HIV-1</name>
    <dbReference type="NCBI Taxonomy" id="388815"/>
    <lineage>
        <taxon>Viruses</taxon>
        <taxon>Riboviria</taxon>
        <taxon>Pararnavirae</taxon>
        <taxon>Artverviricota</taxon>
        <taxon>Revtraviricetes</taxon>
        <taxon>Ortervirales</taxon>
        <taxon>Retroviridae</taxon>
        <taxon>Orthoretrovirinae</taxon>
        <taxon>Lentivirus</taxon>
        <taxon>Human immunodeficiency virus type 1</taxon>
    </lineage>
</organism>
<reference key="1">
    <citation type="journal article" date="2000" name="AIDS Res. Hum. Retroviruses">
        <title>Near-full-length genome sequencing of divergent African HIV type 1 subtype F viruses leads to the identification of a new HIV type 1 subtype designated K.</title>
        <authorList>
            <person name="Triques K."/>
            <person name="Bourgeois A."/>
            <person name="Vidale N."/>
            <person name="Mpoudi-Ngole E."/>
            <person name="Mulanga-Kabeya C."/>
            <person name="Nzilambi N."/>
            <person name="Torimiro N."/>
            <person name="Saman E."/>
            <person name="Delaporte E."/>
            <person name="Peeters M."/>
        </authorList>
    </citation>
    <scope>NUCLEOTIDE SEQUENCE [GENOMIC RNA]</scope>
</reference>
<evidence type="ECO:0000250" key="1">
    <source>
        <dbReference type="UniProtKB" id="O70897"/>
    </source>
</evidence>
<evidence type="ECO:0000255" key="2">
    <source>
        <dbReference type="HAMAP-Rule" id="MF_04081"/>
    </source>
</evidence>
<evidence type="ECO:0000256" key="3">
    <source>
        <dbReference type="SAM" id="MobiDB-lite"/>
    </source>
</evidence>